<organism>
    <name type="scientific">Salmonella choleraesuis (strain SC-B67)</name>
    <dbReference type="NCBI Taxonomy" id="321314"/>
    <lineage>
        <taxon>Bacteria</taxon>
        <taxon>Pseudomonadati</taxon>
        <taxon>Pseudomonadota</taxon>
        <taxon>Gammaproteobacteria</taxon>
        <taxon>Enterobacterales</taxon>
        <taxon>Enterobacteriaceae</taxon>
        <taxon>Salmonella</taxon>
    </lineage>
</organism>
<reference key="1">
    <citation type="journal article" date="2005" name="Nucleic Acids Res.">
        <title>The genome sequence of Salmonella enterica serovar Choleraesuis, a highly invasive and resistant zoonotic pathogen.</title>
        <authorList>
            <person name="Chiu C.-H."/>
            <person name="Tang P."/>
            <person name="Chu C."/>
            <person name="Hu S."/>
            <person name="Bao Q."/>
            <person name="Yu J."/>
            <person name="Chou Y.-Y."/>
            <person name="Wang H.-S."/>
            <person name="Lee Y.-S."/>
        </authorList>
    </citation>
    <scope>NUCLEOTIDE SEQUENCE [LARGE SCALE GENOMIC DNA]</scope>
    <source>
        <strain>SC-B67</strain>
    </source>
</reference>
<accession>Q57J91</accession>
<evidence type="ECO:0000255" key="1">
    <source>
        <dbReference type="HAMAP-Rule" id="MF_01206"/>
    </source>
</evidence>
<comment type="function">
    <text evidence="1">Part of the MsrPQ system that repairs oxidized periplasmic proteins containing methionine sulfoxide residues (Met-O), using respiratory chain electrons. Thus protects these proteins from oxidative-stress damage caused by reactive species of oxygen and chlorine generated by the host defense mechanisms. MsrPQ is essential for the maintenance of envelope integrity under bleach stress, rescuing a wide series of structurally unrelated periplasmic proteins from methionine oxidation, including the primary periplasmic chaperone SurA and the lipoprotein Pal. The catalytic subunit MsrP is non-stereospecific, being able to reduce both (R-) and (S-) diastereoisomers of methionine sulfoxide.</text>
</comment>
<comment type="catalytic activity">
    <reaction evidence="1">
        <text>L-methionyl-[protein] + a quinone + H2O = L-methionyl-(S)-S-oxide-[protein] + a quinol</text>
        <dbReference type="Rhea" id="RHEA:51292"/>
        <dbReference type="Rhea" id="RHEA-COMP:12313"/>
        <dbReference type="Rhea" id="RHEA-COMP:12315"/>
        <dbReference type="ChEBI" id="CHEBI:15377"/>
        <dbReference type="ChEBI" id="CHEBI:16044"/>
        <dbReference type="ChEBI" id="CHEBI:24646"/>
        <dbReference type="ChEBI" id="CHEBI:44120"/>
        <dbReference type="ChEBI" id="CHEBI:132124"/>
    </reaction>
</comment>
<comment type="catalytic activity">
    <reaction evidence="1">
        <text>L-methionyl-[protein] + a quinone + H2O = L-methionyl-(R)-S-oxide-[protein] + a quinol</text>
        <dbReference type="Rhea" id="RHEA:51296"/>
        <dbReference type="Rhea" id="RHEA-COMP:12313"/>
        <dbReference type="Rhea" id="RHEA-COMP:12314"/>
        <dbReference type="ChEBI" id="CHEBI:15377"/>
        <dbReference type="ChEBI" id="CHEBI:16044"/>
        <dbReference type="ChEBI" id="CHEBI:24646"/>
        <dbReference type="ChEBI" id="CHEBI:45764"/>
        <dbReference type="ChEBI" id="CHEBI:132124"/>
    </reaction>
</comment>
<comment type="cofactor">
    <cofactor evidence="1">
        <name>Mo-molybdopterin</name>
        <dbReference type="ChEBI" id="CHEBI:71302"/>
    </cofactor>
    <text evidence="1">Binds 1 Mo-molybdopterin (Mo-MPT) cofactor per subunit.</text>
</comment>
<comment type="subunit">
    <text evidence="1">Heterodimer of a catalytic subunit (MsrP) and a heme-binding subunit (MsrQ).</text>
</comment>
<comment type="subcellular location">
    <subcellularLocation>
        <location evidence="1">Periplasm</location>
    </subcellularLocation>
    <text evidence="1">Is attached to the inner membrane when interacting with the MsrQ subunit.</text>
</comment>
<comment type="PTM">
    <text evidence="1">Predicted to be exported by the Tat system. The position of the signal peptide cleavage has not been experimentally proven.</text>
</comment>
<comment type="similarity">
    <text evidence="1">Belongs to the MsrP family.</text>
</comment>
<protein>
    <recommendedName>
        <fullName evidence="1">Protein-methionine-sulfoxide reductase catalytic subunit MsrP</fullName>
        <ecNumber evidence="1">1.8.5.-</ecNumber>
    </recommendedName>
</protein>
<dbReference type="EC" id="1.8.5.-" evidence="1"/>
<dbReference type="EMBL" id="AE017220">
    <property type="protein sequence ID" value="AAX67221.1"/>
    <property type="molecule type" value="Genomic_DNA"/>
</dbReference>
<dbReference type="RefSeq" id="WP_000723877.1">
    <property type="nucleotide sequence ID" value="NC_006905.1"/>
</dbReference>
<dbReference type="SMR" id="Q57J91"/>
<dbReference type="KEGG" id="sec:SCH_3315"/>
<dbReference type="HOGENOM" id="CLU_045520_0_0_6"/>
<dbReference type="Proteomes" id="UP000000538">
    <property type="component" value="Chromosome"/>
</dbReference>
<dbReference type="GO" id="GO:0042597">
    <property type="term" value="C:periplasmic space"/>
    <property type="evidence" value="ECO:0007669"/>
    <property type="project" value="UniProtKB-SubCell"/>
</dbReference>
<dbReference type="GO" id="GO:0046872">
    <property type="term" value="F:metal ion binding"/>
    <property type="evidence" value="ECO:0007669"/>
    <property type="project" value="UniProtKB-KW"/>
</dbReference>
<dbReference type="GO" id="GO:0043546">
    <property type="term" value="F:molybdopterin cofactor binding"/>
    <property type="evidence" value="ECO:0007669"/>
    <property type="project" value="UniProtKB-UniRule"/>
</dbReference>
<dbReference type="GO" id="GO:0016672">
    <property type="term" value="F:oxidoreductase activity, acting on a sulfur group of donors, quinone or similar compound as acceptor"/>
    <property type="evidence" value="ECO:0007669"/>
    <property type="project" value="UniProtKB-UniRule"/>
</dbReference>
<dbReference type="GO" id="GO:0030091">
    <property type="term" value="P:protein repair"/>
    <property type="evidence" value="ECO:0007669"/>
    <property type="project" value="UniProtKB-UniRule"/>
</dbReference>
<dbReference type="CDD" id="cd02107">
    <property type="entry name" value="YedY_like_Moco"/>
    <property type="match status" value="1"/>
</dbReference>
<dbReference type="FunFam" id="3.90.420.10:FF:000001">
    <property type="entry name" value="Protein-methionine-sulfoxide reductase catalytic subunit MsrP"/>
    <property type="match status" value="1"/>
</dbReference>
<dbReference type="Gene3D" id="3.90.420.10">
    <property type="entry name" value="Oxidoreductase, molybdopterin-binding domain"/>
    <property type="match status" value="1"/>
</dbReference>
<dbReference type="HAMAP" id="MF_01206">
    <property type="entry name" value="MsrP"/>
    <property type="match status" value="1"/>
</dbReference>
<dbReference type="InterPro" id="IPR022867">
    <property type="entry name" value="MsrP"/>
</dbReference>
<dbReference type="InterPro" id="IPR000572">
    <property type="entry name" value="OxRdtase_Mopterin-bd_dom"/>
</dbReference>
<dbReference type="InterPro" id="IPR036374">
    <property type="entry name" value="OxRdtase_Mopterin-bd_sf"/>
</dbReference>
<dbReference type="InterPro" id="IPR006311">
    <property type="entry name" value="TAT_signal"/>
</dbReference>
<dbReference type="NCBIfam" id="NF003767">
    <property type="entry name" value="PRK05363.1"/>
    <property type="match status" value="1"/>
</dbReference>
<dbReference type="PANTHER" id="PTHR43032">
    <property type="entry name" value="PROTEIN-METHIONINE-SULFOXIDE REDUCTASE"/>
    <property type="match status" value="1"/>
</dbReference>
<dbReference type="PANTHER" id="PTHR43032:SF3">
    <property type="entry name" value="PROTEIN-METHIONINE-SULFOXIDE REDUCTASE CATALYTIC SUBUNIT MSRP"/>
    <property type="match status" value="1"/>
</dbReference>
<dbReference type="Pfam" id="PF00174">
    <property type="entry name" value="Oxidored_molyb"/>
    <property type="match status" value="1"/>
</dbReference>
<dbReference type="SUPFAM" id="SSF56524">
    <property type="entry name" value="Oxidoreductase molybdopterin-binding domain"/>
    <property type="match status" value="1"/>
</dbReference>
<dbReference type="PROSITE" id="PS51318">
    <property type="entry name" value="TAT"/>
    <property type="match status" value="1"/>
</dbReference>
<name>MSRP_SALCH</name>
<sequence>MKKIRPLTEADVTAESAFFMQRRQVLKALGISAAALSLPSTAQADLFSWFKGNDRPKAPAGKPLEFSQPAAWRSDLALTPEDKVTGYNNFYEFGLDKADPAANAGSLKTEPWTLKISGEVAKPFTLDYDDLTHRFPLEERIYRMRCVEAWSMVVPWIGFPLYKLLAQAQPTSHAKYVAFETLYAPDDMPGQKDRFIGGGLKYPYVEGLRLDEAMHPLTLMTVGVYGKALPPQNGAPIRLIVPWKYGFKGIKSVVSIKLTRERPPTTWNLSAPNEYGFYANVNPHVDHPRWSQATERFIGSGGILDVQRQPTLLFNGYANEVASLYRGLNLRENF</sequence>
<keyword id="KW-0479">Metal-binding</keyword>
<keyword id="KW-0500">Molybdenum</keyword>
<keyword id="KW-0560">Oxidoreductase</keyword>
<keyword id="KW-0574">Periplasm</keyword>
<keyword id="KW-0732">Signal</keyword>
<gene>
    <name evidence="1" type="primary">msrP</name>
    <name type="ordered locus">SCH_3315</name>
</gene>
<proteinExistence type="inferred from homology"/>
<feature type="signal peptide" description="Tat-type signal" evidence="1">
    <location>
        <begin position="1"/>
        <end position="44"/>
    </location>
</feature>
<feature type="chain" id="PRO_1000066163" description="Protein-methionine-sulfoxide reductase catalytic subunit MsrP" evidence="1">
    <location>
        <begin position="45"/>
        <end position="334"/>
    </location>
</feature>
<feature type="binding site" evidence="1">
    <location>
        <position position="88"/>
    </location>
    <ligand>
        <name>Mo-molybdopterin</name>
        <dbReference type="ChEBI" id="CHEBI:71302"/>
    </ligand>
</feature>
<feature type="binding site" evidence="1">
    <location>
        <begin position="91"/>
        <end position="92"/>
    </location>
    <ligand>
        <name>Mo-molybdopterin</name>
        <dbReference type="ChEBI" id="CHEBI:71302"/>
    </ligand>
</feature>
<feature type="binding site" evidence="1">
    <location>
        <position position="146"/>
    </location>
    <ligand>
        <name>Mo-molybdopterin</name>
        <dbReference type="ChEBI" id="CHEBI:71302"/>
    </ligand>
    <ligandPart>
        <name>Mo</name>
        <dbReference type="ChEBI" id="CHEBI:28685"/>
    </ligandPart>
</feature>
<feature type="binding site" evidence="1">
    <location>
        <position position="181"/>
    </location>
    <ligand>
        <name>Mo-molybdopterin</name>
        <dbReference type="ChEBI" id="CHEBI:71302"/>
    </ligand>
</feature>
<feature type="binding site" evidence="1">
    <location>
        <position position="233"/>
    </location>
    <ligand>
        <name>Mo-molybdopterin</name>
        <dbReference type="ChEBI" id="CHEBI:71302"/>
    </ligand>
</feature>
<feature type="binding site" evidence="1">
    <location>
        <position position="238"/>
    </location>
    <ligand>
        <name>Mo-molybdopterin</name>
        <dbReference type="ChEBI" id="CHEBI:71302"/>
    </ligand>
</feature>
<feature type="binding site" evidence="1">
    <location>
        <begin position="249"/>
        <end position="251"/>
    </location>
    <ligand>
        <name>Mo-molybdopterin</name>
        <dbReference type="ChEBI" id="CHEBI:71302"/>
    </ligand>
</feature>